<keyword id="KW-0131">Cell cycle</keyword>
<keyword id="KW-0132">Cell division</keyword>
<keyword id="KW-0133">Cell shape</keyword>
<keyword id="KW-0961">Cell wall biogenesis/degradation</keyword>
<keyword id="KW-0963">Cytoplasm</keyword>
<keyword id="KW-0573">Peptidoglycan synthesis</keyword>
<keyword id="KW-0670">Pyruvate</keyword>
<keyword id="KW-0808">Transferase</keyword>
<proteinExistence type="inferred from homology"/>
<protein>
    <recommendedName>
        <fullName evidence="1">UDP-N-acetylglucosamine 1-carboxyvinyltransferase</fullName>
        <ecNumber evidence="1">2.5.1.7</ecNumber>
    </recommendedName>
    <alternativeName>
        <fullName evidence="1">Enoylpyruvate transferase</fullName>
    </alternativeName>
    <alternativeName>
        <fullName evidence="1">UDP-N-acetylglucosamine enolpyruvyl transferase</fullName>
        <shortName evidence="1">EPT</shortName>
    </alternativeName>
</protein>
<gene>
    <name evidence="1" type="primary">murA</name>
    <name type="ordered locus">CGSHiEE_06660</name>
</gene>
<reference key="1">
    <citation type="journal article" date="2007" name="Genome Biol.">
        <title>Characterization and modeling of the Haemophilus influenzae core and supragenomes based on the complete genomic sequences of Rd and 12 clinical nontypeable strains.</title>
        <authorList>
            <person name="Hogg J.S."/>
            <person name="Hu F.Z."/>
            <person name="Janto B."/>
            <person name="Boissy R."/>
            <person name="Hayes J."/>
            <person name="Keefe R."/>
            <person name="Post J.C."/>
            <person name="Ehrlich G.D."/>
        </authorList>
    </citation>
    <scope>NUCLEOTIDE SEQUENCE [LARGE SCALE GENOMIC DNA]</scope>
    <source>
        <strain>PittEE</strain>
    </source>
</reference>
<dbReference type="EC" id="2.5.1.7" evidence="1"/>
<dbReference type="EMBL" id="CP000671">
    <property type="protein sequence ID" value="ABQ98675.1"/>
    <property type="molecule type" value="Genomic_DNA"/>
</dbReference>
<dbReference type="SMR" id="A5UD24"/>
<dbReference type="KEGG" id="hip:CGSHiEE_06660"/>
<dbReference type="HOGENOM" id="CLU_027387_0_0_6"/>
<dbReference type="UniPathway" id="UPA00219"/>
<dbReference type="GO" id="GO:0005737">
    <property type="term" value="C:cytoplasm"/>
    <property type="evidence" value="ECO:0007669"/>
    <property type="project" value="UniProtKB-SubCell"/>
</dbReference>
<dbReference type="GO" id="GO:0008760">
    <property type="term" value="F:UDP-N-acetylglucosamine 1-carboxyvinyltransferase activity"/>
    <property type="evidence" value="ECO:0007669"/>
    <property type="project" value="UniProtKB-UniRule"/>
</dbReference>
<dbReference type="GO" id="GO:0051301">
    <property type="term" value="P:cell division"/>
    <property type="evidence" value="ECO:0007669"/>
    <property type="project" value="UniProtKB-KW"/>
</dbReference>
<dbReference type="GO" id="GO:0071555">
    <property type="term" value="P:cell wall organization"/>
    <property type="evidence" value="ECO:0007669"/>
    <property type="project" value="UniProtKB-KW"/>
</dbReference>
<dbReference type="GO" id="GO:0009252">
    <property type="term" value="P:peptidoglycan biosynthetic process"/>
    <property type="evidence" value="ECO:0007669"/>
    <property type="project" value="UniProtKB-UniRule"/>
</dbReference>
<dbReference type="GO" id="GO:0008360">
    <property type="term" value="P:regulation of cell shape"/>
    <property type="evidence" value="ECO:0007669"/>
    <property type="project" value="UniProtKB-KW"/>
</dbReference>
<dbReference type="GO" id="GO:0019277">
    <property type="term" value="P:UDP-N-acetylgalactosamine biosynthetic process"/>
    <property type="evidence" value="ECO:0007669"/>
    <property type="project" value="InterPro"/>
</dbReference>
<dbReference type="CDD" id="cd01555">
    <property type="entry name" value="UdpNAET"/>
    <property type="match status" value="1"/>
</dbReference>
<dbReference type="FunFam" id="3.65.10.10:FF:000002">
    <property type="entry name" value="UDP-N-acetylglucosamine 1-carboxyvinyltransferase"/>
    <property type="match status" value="1"/>
</dbReference>
<dbReference type="Gene3D" id="3.65.10.10">
    <property type="entry name" value="Enolpyruvate transferase domain"/>
    <property type="match status" value="2"/>
</dbReference>
<dbReference type="HAMAP" id="MF_00111">
    <property type="entry name" value="MurA"/>
    <property type="match status" value="1"/>
</dbReference>
<dbReference type="InterPro" id="IPR001986">
    <property type="entry name" value="Enolpyruvate_Tfrase_dom"/>
</dbReference>
<dbReference type="InterPro" id="IPR036968">
    <property type="entry name" value="Enolpyruvate_Tfrase_sf"/>
</dbReference>
<dbReference type="InterPro" id="IPR050068">
    <property type="entry name" value="MurA_subfamily"/>
</dbReference>
<dbReference type="InterPro" id="IPR013792">
    <property type="entry name" value="RNA3'P_cycl/enolpyr_Trfase_a/b"/>
</dbReference>
<dbReference type="InterPro" id="IPR005750">
    <property type="entry name" value="UDP_GlcNAc_COvinyl_MurA"/>
</dbReference>
<dbReference type="NCBIfam" id="TIGR01072">
    <property type="entry name" value="murA"/>
    <property type="match status" value="1"/>
</dbReference>
<dbReference type="NCBIfam" id="NF006873">
    <property type="entry name" value="PRK09369.1"/>
    <property type="match status" value="1"/>
</dbReference>
<dbReference type="PANTHER" id="PTHR43783">
    <property type="entry name" value="UDP-N-ACETYLGLUCOSAMINE 1-CARBOXYVINYLTRANSFERASE"/>
    <property type="match status" value="1"/>
</dbReference>
<dbReference type="PANTHER" id="PTHR43783:SF1">
    <property type="entry name" value="UDP-N-ACETYLGLUCOSAMINE 1-CARBOXYVINYLTRANSFERASE"/>
    <property type="match status" value="1"/>
</dbReference>
<dbReference type="Pfam" id="PF00275">
    <property type="entry name" value="EPSP_synthase"/>
    <property type="match status" value="1"/>
</dbReference>
<dbReference type="SUPFAM" id="SSF55205">
    <property type="entry name" value="EPT/RTPC-like"/>
    <property type="match status" value="1"/>
</dbReference>
<feature type="chain" id="PRO_1000023038" description="UDP-N-acetylglucosamine 1-carboxyvinyltransferase">
    <location>
        <begin position="1"/>
        <end position="424"/>
    </location>
</feature>
<feature type="active site" description="Proton donor" evidence="1">
    <location>
        <position position="117"/>
    </location>
</feature>
<feature type="binding site" evidence="1">
    <location>
        <begin position="22"/>
        <end position="23"/>
    </location>
    <ligand>
        <name>phosphoenolpyruvate</name>
        <dbReference type="ChEBI" id="CHEBI:58702"/>
    </ligand>
</feature>
<feature type="binding site" evidence="1">
    <location>
        <position position="93"/>
    </location>
    <ligand>
        <name>UDP-N-acetyl-alpha-D-glucosamine</name>
        <dbReference type="ChEBI" id="CHEBI:57705"/>
    </ligand>
</feature>
<feature type="binding site" evidence="1">
    <location>
        <begin position="122"/>
        <end position="126"/>
    </location>
    <ligand>
        <name>UDP-N-acetyl-alpha-D-glucosamine</name>
        <dbReference type="ChEBI" id="CHEBI:57705"/>
    </ligand>
</feature>
<feature type="binding site" evidence="1">
    <location>
        <begin position="162"/>
        <end position="165"/>
    </location>
    <ligand>
        <name>UDP-N-acetyl-alpha-D-glucosamine</name>
        <dbReference type="ChEBI" id="CHEBI:57705"/>
    </ligand>
</feature>
<feature type="binding site" evidence="1">
    <location>
        <position position="307"/>
    </location>
    <ligand>
        <name>UDP-N-acetyl-alpha-D-glucosamine</name>
        <dbReference type="ChEBI" id="CHEBI:57705"/>
    </ligand>
</feature>
<feature type="binding site" evidence="1">
    <location>
        <position position="329"/>
    </location>
    <ligand>
        <name>UDP-N-acetyl-alpha-D-glucosamine</name>
        <dbReference type="ChEBI" id="CHEBI:57705"/>
    </ligand>
</feature>
<feature type="modified residue" description="2-(S-cysteinyl)pyruvic acid O-phosphothioketal" evidence="1">
    <location>
        <position position="117"/>
    </location>
</feature>
<evidence type="ECO:0000255" key="1">
    <source>
        <dbReference type="HAMAP-Rule" id="MF_00111"/>
    </source>
</evidence>
<organism>
    <name type="scientific">Haemophilus influenzae (strain PittEE)</name>
    <dbReference type="NCBI Taxonomy" id="374930"/>
    <lineage>
        <taxon>Bacteria</taxon>
        <taxon>Pseudomonadati</taxon>
        <taxon>Pseudomonadota</taxon>
        <taxon>Gammaproteobacteria</taxon>
        <taxon>Pasteurellales</taxon>
        <taxon>Pasteurellaceae</taxon>
        <taxon>Haemophilus</taxon>
    </lineage>
</organism>
<name>MURA_HAEIE</name>
<comment type="function">
    <text evidence="1">Cell wall formation. Adds enolpyruvyl to UDP-N-acetylglucosamine.</text>
</comment>
<comment type="catalytic activity">
    <reaction evidence="1">
        <text>phosphoenolpyruvate + UDP-N-acetyl-alpha-D-glucosamine = UDP-N-acetyl-3-O-(1-carboxyvinyl)-alpha-D-glucosamine + phosphate</text>
        <dbReference type="Rhea" id="RHEA:18681"/>
        <dbReference type="ChEBI" id="CHEBI:43474"/>
        <dbReference type="ChEBI" id="CHEBI:57705"/>
        <dbReference type="ChEBI" id="CHEBI:58702"/>
        <dbReference type="ChEBI" id="CHEBI:68483"/>
        <dbReference type="EC" id="2.5.1.7"/>
    </reaction>
</comment>
<comment type="pathway">
    <text evidence="1">Cell wall biogenesis; peptidoglycan biosynthesis.</text>
</comment>
<comment type="subcellular location">
    <subcellularLocation>
        <location evidence="1">Cytoplasm</location>
    </subcellularLocation>
</comment>
<comment type="similarity">
    <text evidence="1">Belongs to the EPSP synthase family. MurA subfamily.</text>
</comment>
<accession>A5UD24</accession>
<sequence length="424" mass="45313">MDKFRVYGQSRLSGSVNISGAKNAALPILFAAILATEPVKLTNVPELKDIETTLNILRQLGVIANRDETGAVLLDASNINHFTAPYELVKTMRASIWALAPLVARFHQGQVSLPGGCSIGARPVDLHISGLEKLGADIVLEEGYVKAQVSDRLVGTRIVIEKVSVGATLSIMMAATLAKGTTVIENAAREPEIVDTADFLNKMGAKITGAGSDHITIEGVERLTGCEHSVVPDRIETGTFLIAAAISGGRVVCQNTKADTLDAVIDKLREAGAQVDVTENSITLDMLGNRPKAVNIRTAPHPGFPTDMQAQFTLLNMVAEGTSIITETIFENRFMHIPELIRMGGKAEIEGNTAVCHGVEQLSGTEVIATDLRASISLVLAGCIATGETIVDRIYHIDRGYEHIEDKLRGLGAKIERFSGSDEA</sequence>